<reference key="1">
    <citation type="journal article" date="2009" name="J. Bacteriol.">
        <title>The genome of Burkholderia cenocepacia J2315, an epidemic pathogen of cystic fibrosis patients.</title>
        <authorList>
            <person name="Holden M.T."/>
            <person name="Seth-Smith H.M."/>
            <person name="Crossman L.C."/>
            <person name="Sebaihia M."/>
            <person name="Bentley S.D."/>
            <person name="Cerdeno-Tarraga A.M."/>
            <person name="Thomson N.R."/>
            <person name="Bason N."/>
            <person name="Quail M.A."/>
            <person name="Sharp S."/>
            <person name="Cherevach I."/>
            <person name="Churcher C."/>
            <person name="Goodhead I."/>
            <person name="Hauser H."/>
            <person name="Holroyd N."/>
            <person name="Mungall K."/>
            <person name="Scott P."/>
            <person name="Walker D."/>
            <person name="White B."/>
            <person name="Rose H."/>
            <person name="Iversen P."/>
            <person name="Mil-Homens D."/>
            <person name="Rocha E.P."/>
            <person name="Fialho A.M."/>
            <person name="Baldwin A."/>
            <person name="Dowson C."/>
            <person name="Barrell B.G."/>
            <person name="Govan J.R."/>
            <person name="Vandamme P."/>
            <person name="Hart C.A."/>
            <person name="Mahenthiralingam E."/>
            <person name="Parkhill J."/>
        </authorList>
    </citation>
    <scope>NUCLEOTIDE SEQUENCE [LARGE SCALE GENOMIC DNA]</scope>
    <source>
        <strain>ATCC BAA-245 / DSM 16553 / LMG 16656 / NCTC 13227 / J2315 / CF5610</strain>
    </source>
</reference>
<sequence length="104" mass="11936">MAIIPDKQDSTVLERKQQKLKPPSMYKVVLLNDDFTPMEFVVMVVQEYFKKDRETATQIMLKVHREGRGVCGVYTRDIASTKVEQVVTHARQAGHPLQCVMEEA</sequence>
<name>CLPS_BURCJ</name>
<accession>B4E904</accession>
<proteinExistence type="inferred from homology"/>
<organism>
    <name type="scientific">Burkholderia cenocepacia (strain ATCC BAA-245 / DSM 16553 / LMG 16656 / NCTC 13227 / J2315 / CF5610)</name>
    <name type="common">Burkholderia cepacia (strain J2315)</name>
    <dbReference type="NCBI Taxonomy" id="216591"/>
    <lineage>
        <taxon>Bacteria</taxon>
        <taxon>Pseudomonadati</taxon>
        <taxon>Pseudomonadota</taxon>
        <taxon>Betaproteobacteria</taxon>
        <taxon>Burkholderiales</taxon>
        <taxon>Burkholderiaceae</taxon>
        <taxon>Burkholderia</taxon>
        <taxon>Burkholderia cepacia complex</taxon>
    </lineage>
</organism>
<dbReference type="EMBL" id="AM747720">
    <property type="protein sequence ID" value="CAR53032.1"/>
    <property type="molecule type" value="Genomic_DNA"/>
</dbReference>
<dbReference type="RefSeq" id="WP_006398529.1">
    <property type="nucleotide sequence ID" value="NC_011000.1"/>
</dbReference>
<dbReference type="SMR" id="B4E904"/>
<dbReference type="GeneID" id="98107640"/>
<dbReference type="KEGG" id="bcj:BCAL2731"/>
<dbReference type="eggNOG" id="COG2127">
    <property type="taxonomic scope" value="Bacteria"/>
</dbReference>
<dbReference type="HOGENOM" id="CLU_134358_0_0_4"/>
<dbReference type="BioCyc" id="BCEN216591:G1G1V-3024-MONOMER"/>
<dbReference type="Proteomes" id="UP000001035">
    <property type="component" value="Chromosome 1"/>
</dbReference>
<dbReference type="GO" id="GO:0030163">
    <property type="term" value="P:protein catabolic process"/>
    <property type="evidence" value="ECO:0007669"/>
    <property type="project" value="InterPro"/>
</dbReference>
<dbReference type="GO" id="GO:0006508">
    <property type="term" value="P:proteolysis"/>
    <property type="evidence" value="ECO:0007669"/>
    <property type="project" value="UniProtKB-UniRule"/>
</dbReference>
<dbReference type="FunFam" id="3.30.1390.10:FF:000002">
    <property type="entry name" value="ATP-dependent Clp protease adapter protein ClpS"/>
    <property type="match status" value="1"/>
</dbReference>
<dbReference type="Gene3D" id="3.30.1390.10">
    <property type="match status" value="1"/>
</dbReference>
<dbReference type="HAMAP" id="MF_00302">
    <property type="entry name" value="ClpS"/>
    <property type="match status" value="1"/>
</dbReference>
<dbReference type="InterPro" id="IPR022935">
    <property type="entry name" value="ClpS"/>
</dbReference>
<dbReference type="InterPro" id="IPR003769">
    <property type="entry name" value="ClpS_core"/>
</dbReference>
<dbReference type="InterPro" id="IPR014719">
    <property type="entry name" value="Ribosomal_bL12_C/ClpS-like"/>
</dbReference>
<dbReference type="NCBIfam" id="NF000672">
    <property type="entry name" value="PRK00033.1-5"/>
    <property type="match status" value="1"/>
</dbReference>
<dbReference type="PANTHER" id="PTHR33473:SF19">
    <property type="entry name" value="ATP-DEPENDENT CLP PROTEASE ADAPTER PROTEIN CLPS"/>
    <property type="match status" value="1"/>
</dbReference>
<dbReference type="PANTHER" id="PTHR33473">
    <property type="entry name" value="ATP-DEPENDENT CLP PROTEASE ADAPTER PROTEIN CLPS1, CHLOROPLASTIC"/>
    <property type="match status" value="1"/>
</dbReference>
<dbReference type="Pfam" id="PF02617">
    <property type="entry name" value="ClpS"/>
    <property type="match status" value="1"/>
</dbReference>
<dbReference type="SUPFAM" id="SSF54736">
    <property type="entry name" value="ClpS-like"/>
    <property type="match status" value="1"/>
</dbReference>
<comment type="function">
    <text evidence="1">Involved in the modulation of the specificity of the ClpAP-mediated ATP-dependent protein degradation.</text>
</comment>
<comment type="subunit">
    <text evidence="1">Binds to the N-terminal domain of the chaperone ClpA.</text>
</comment>
<comment type="similarity">
    <text evidence="1">Belongs to the ClpS family.</text>
</comment>
<gene>
    <name evidence="1" type="primary">clpS</name>
    <name type="ordered locus">BceJ2315_26700</name>
    <name type="ORF">BCAL2731</name>
</gene>
<feature type="chain" id="PRO_1000115449" description="ATP-dependent Clp protease adapter protein ClpS">
    <location>
        <begin position="1"/>
        <end position="104"/>
    </location>
</feature>
<evidence type="ECO:0000255" key="1">
    <source>
        <dbReference type="HAMAP-Rule" id="MF_00302"/>
    </source>
</evidence>
<protein>
    <recommendedName>
        <fullName evidence="1">ATP-dependent Clp protease adapter protein ClpS</fullName>
    </recommendedName>
</protein>